<keyword id="KW-0808">Transferase</keyword>
<keyword id="KW-0843">Virulence</keyword>
<sequence length="582" mass="63902">MFEPYLTTPLLLKAANTPHHIPKMSRICSDRPSTLVKYGNRVQPFPFPERQWPNKVLKTAPVLFSTDLRDGNQSLPNPMTFEQKLSLYKLLVSIGFKEIEVAYPCANQAEFDFVRHLIETPGLIPEDVLIQVITPCQEETIKRAVESVRGAKQAILFTYLPSSDNYRDTVLKISEDDWVERARWGAAYARSITKDSEDPVVRSTRWTFNFGFEDFANARIGAIIRCTEAVRAEWNPSKDEKMIIGVASSVEASTPNVFADQIECLSGNISNRDTVRLTVHTHNDRGGAVASAELASLAGADRIEGCLFGNGERAGNMDLVVYALNLLTQGIEPGIDLSRLDEIRKVYEDITELPVHPRTPYSGAYYLKAFSGAHQDAISKGLRLRTSATQEGKPCAVWPAWRVPYLPLDPADIGRSLDDVVGINSQSGKGGVAWVVNLGLGLDLPPGLARTFSKAVKERSIHFGREMSSDEVCMAFLEEYQVLRAADKSDDDMIQAVLRTESPLVAALGQVVGLSSLSASITSHTLADDVLSYAAYANVTPEESKPSLWGVGLGVSLQQAKLRAVVSALQVSDGSMSWVRLA</sequence>
<reference key="1">
    <citation type="journal article" date="2007" name="Mol. Plant Microbe Interact.">
        <title>Expression profiles of genes encoded by the supernumerary chromosome controlling AM-toxin biosynthesis and pathogenicity in the apple pathotype of Alternaria alternata.</title>
        <authorList>
            <person name="Harimoto Y."/>
            <person name="Hatta R."/>
            <person name="Kodama M."/>
            <person name="Yamamoto M."/>
            <person name="Otani H."/>
            <person name="Tsuge T."/>
        </authorList>
    </citation>
    <scope>NUCLEOTIDE SEQUENCE [GENOMIC DNA]</scope>
    <scope>INDUCTION</scope>
    <scope>PATHWAY</scope>
    <source>
        <strain>NBRC 8984</strain>
    </source>
</reference>
<reference key="2">
    <citation type="journal article" date="2000" name="Mol. Plant Microbe Interact.">
        <title>Cloning and characterization of a cyclic peptide synthetase gene from Alternaria alternata apple pathotype whose product is involved in AM-toxin synthesis and pathogenicity.</title>
        <authorList>
            <person name="Johnson R.D."/>
            <person name="Johnson L."/>
            <person name="Itoh Y."/>
            <person name="Kodama M."/>
            <person name="Otani H."/>
            <person name="Kohmoto K."/>
        </authorList>
    </citation>
    <scope>FUNCTION</scope>
    <source>
        <strain>M-71</strain>
    </source>
</reference>
<reference key="3">
    <citation type="journal article" date="2004" name="Mol. Microbiol.">
        <title>Dissection of the host range of the fungal plant pathogen Alternaria alternata by modification of secondary metabolism.</title>
        <authorList>
            <person name="Ito K."/>
            <person name="Tanaka T."/>
            <person name="Hatta R."/>
            <person name="Yamamoto M."/>
            <person name="Akimitsu K."/>
            <person name="Tsuge T."/>
        </authorList>
    </citation>
    <scope>FUNCTION</scope>
    <source>
        <strain>NBRC 8984</strain>
    </source>
</reference>
<reference key="4">
    <citation type="journal article" date="2013" name="FEMS Microbiol. Rev.">
        <title>Host-selective toxins produced by the plant pathogenic fungus Alternaria alternata.</title>
        <authorList>
            <person name="Tsuge T."/>
            <person name="Harimoto Y."/>
            <person name="Akimitsu K."/>
            <person name="Ohtani K."/>
            <person name="Kodama M."/>
            <person name="Akagi Y."/>
            <person name="Egusa M."/>
            <person name="Yamamoto M."/>
            <person name="Otani H."/>
        </authorList>
    </citation>
    <scope>REVIEW ON HOST-SELECTIVE TOXINS</scope>
</reference>
<feature type="chain" id="PRO_0000444857" description="Isopropyl malate synthase AMT7">
    <location>
        <begin position="1"/>
        <end position="582"/>
    </location>
</feature>
<feature type="domain" description="Pyruvate carboxyltransferase" evidence="2">
    <location>
        <begin position="61"/>
        <end position="341"/>
    </location>
</feature>
<organism>
    <name type="scientific">Alternaria alternata</name>
    <name type="common">Alternaria rot fungus</name>
    <name type="synonym">Torula alternata</name>
    <dbReference type="NCBI Taxonomy" id="5599"/>
    <lineage>
        <taxon>Eukaryota</taxon>
        <taxon>Fungi</taxon>
        <taxon>Dikarya</taxon>
        <taxon>Ascomycota</taxon>
        <taxon>Pezizomycotina</taxon>
        <taxon>Dothideomycetes</taxon>
        <taxon>Pleosporomycetidae</taxon>
        <taxon>Pleosporales</taxon>
        <taxon>Pleosporineae</taxon>
        <taxon>Pleosporaceae</taxon>
        <taxon>Alternaria</taxon>
        <taxon>Alternaria sect. Alternaria</taxon>
        <taxon>Alternaria alternata complex</taxon>
    </lineage>
</organism>
<accession>C9K7B8</accession>
<name>AMT7_ALTAL</name>
<dbReference type="EC" id="2.3.3.13" evidence="1"/>
<dbReference type="EMBL" id="AB525198">
    <property type="protein sequence ID" value="BAI44742.1"/>
    <property type="molecule type" value="Genomic_DNA"/>
</dbReference>
<dbReference type="EMBL" id="AB525199">
    <property type="protein sequence ID" value="BAI44764.1"/>
    <property type="molecule type" value="Genomic_DNA"/>
</dbReference>
<dbReference type="EMBL" id="AB525200">
    <property type="protein sequence ID" value="BAI44806.1"/>
    <property type="molecule type" value="Genomic_DNA"/>
</dbReference>
<dbReference type="SMR" id="C9K7B8"/>
<dbReference type="VEuPathDB" id="FungiDB:CC77DRAFT_1016936"/>
<dbReference type="GO" id="GO:0005739">
    <property type="term" value="C:mitochondrion"/>
    <property type="evidence" value="ECO:0007669"/>
    <property type="project" value="TreeGrafter"/>
</dbReference>
<dbReference type="GO" id="GO:0003852">
    <property type="term" value="F:2-isopropylmalate synthase activity"/>
    <property type="evidence" value="ECO:0007669"/>
    <property type="project" value="UniProtKB-EC"/>
</dbReference>
<dbReference type="GO" id="GO:0009098">
    <property type="term" value="P:L-leucine biosynthetic process"/>
    <property type="evidence" value="ECO:0007669"/>
    <property type="project" value="TreeGrafter"/>
</dbReference>
<dbReference type="Gene3D" id="3.30.160.270">
    <property type="match status" value="1"/>
</dbReference>
<dbReference type="Gene3D" id="3.20.20.70">
    <property type="entry name" value="Aldolase class I"/>
    <property type="match status" value="1"/>
</dbReference>
<dbReference type="InterPro" id="IPR002034">
    <property type="entry name" value="AIPM/Hcit_synth_CS"/>
</dbReference>
<dbReference type="InterPro" id="IPR013785">
    <property type="entry name" value="Aldolase_TIM"/>
</dbReference>
<dbReference type="InterPro" id="IPR054692">
    <property type="entry name" value="LeuA-like_post-cat"/>
</dbReference>
<dbReference type="InterPro" id="IPR036230">
    <property type="entry name" value="LeuA_allosteric_dom_sf"/>
</dbReference>
<dbReference type="InterPro" id="IPR000891">
    <property type="entry name" value="PYR_CT"/>
</dbReference>
<dbReference type="NCBIfam" id="NF002991">
    <property type="entry name" value="PRK03739.1"/>
    <property type="match status" value="1"/>
</dbReference>
<dbReference type="PANTHER" id="PTHR46911">
    <property type="match status" value="1"/>
</dbReference>
<dbReference type="PANTHER" id="PTHR46911:SF1">
    <property type="entry name" value="2-ISOPROPYLMALATE SYNTHASE"/>
    <property type="match status" value="1"/>
</dbReference>
<dbReference type="Pfam" id="PF00682">
    <property type="entry name" value="HMGL-like"/>
    <property type="match status" value="1"/>
</dbReference>
<dbReference type="Pfam" id="PF22615">
    <property type="entry name" value="IPMS_D2"/>
    <property type="match status" value="1"/>
</dbReference>
<dbReference type="SUPFAM" id="SSF51569">
    <property type="entry name" value="Aldolase"/>
    <property type="match status" value="1"/>
</dbReference>
<dbReference type="SUPFAM" id="SSF89000">
    <property type="entry name" value="post-HMGL domain-like"/>
    <property type="match status" value="1"/>
</dbReference>
<dbReference type="PROSITE" id="PS00815">
    <property type="entry name" value="AIPM_HOMOCIT_SYNTH_1"/>
    <property type="match status" value="1"/>
</dbReference>
<dbReference type="PROSITE" id="PS00816">
    <property type="entry name" value="AIPM_HOMOCIT_SYNTH_2"/>
    <property type="match status" value="1"/>
</dbReference>
<dbReference type="PROSITE" id="PS50991">
    <property type="entry name" value="PYR_CT"/>
    <property type="match status" value="1"/>
</dbReference>
<evidence type="ECO:0000250" key="1">
    <source>
        <dbReference type="UniProtKB" id="K0E4E5"/>
    </source>
</evidence>
<evidence type="ECO:0000255" key="2">
    <source>
        <dbReference type="PROSITE-ProRule" id="PRU01151"/>
    </source>
</evidence>
<evidence type="ECO:0000269" key="3">
    <source>
    </source>
</evidence>
<evidence type="ECO:0000269" key="4">
    <source>
    </source>
</evidence>
<evidence type="ECO:0000269" key="5">
    <source>
    </source>
</evidence>
<evidence type="ECO:0000303" key="6">
    <source>
    </source>
</evidence>
<evidence type="ECO:0000303" key="7">
    <source>
    </source>
</evidence>
<evidence type="ECO:0000305" key="8"/>
<evidence type="ECO:0000305" key="9">
    <source>
    </source>
</evidence>
<evidence type="ECO:0000305" key="10">
    <source>
    </source>
</evidence>
<proteinExistence type="evidence at transcript level"/>
<comment type="function">
    <text evidence="3 4 5 7 9 10">Isopropyl malate synthase; part of the gene clusters that mediate the biosynthesis of AM-toxins, host-selective toxins (HSTs) causing Alternaria blotch on apple, a worldwide distributed disease (Probable). AM-toxins are cyclic depsipeptides containing the 3 residues 2-hydroxy-isovaleric acid (2-HIV), dehydroalanine, L-alanine which are common for all 3 AM-toxins I to III. The fourth precursor is L-alpha-amino-methoxyphenyl-valeric acid (L-Amv) for AM-toxin I, L-alpha-amino-phenyl-valeric acid (L-Apv) for AM-toxin II, and L-alpha-amino-hydroxyphenyl-valeric acid (L-Ahv) for AM-toxin III (Probable). AM-toxins have two target sites for affecting susceptible apple cells; they cause invagination of the plasma membrane and electrolyte loss and chloroplast disorganization (PubMed:22846083). The non-ribosomal peptide synthetase AMT1 contains 4 catalytic modules and is responsible for activation of each residue in AM-toxin (PubMed:10875335). The aldo-keto reductase AMT2 catalyzes the conversion of 2-keto-isovaleric acid (2-KIV) to 2-hydroxy-isovaleric acid (2-HIV), one of the precursor residues incorporated by AMT1 during AM-toxin biosynthesis, by reduction of its ketone to an alcohol (PubMed:15066029). The cytochrome P450 monooxygenase AMT3 and the thioesterase AMT4 are also important for AM-toxin production, but their exact function within the AM-toxin biosynthesis are not known yet (PubMed:17990954). Up to 21 proteins (including AMT1 to AMT4) are predicted to be involved in AM-toxin biosynthesis since their expression ishighly up-regulated in AM-toxin-producing cultures (PubMed:17990954).</text>
</comment>
<comment type="catalytic activity">
    <reaction evidence="1">
        <text>3-methyl-2-oxobutanoate + acetyl-CoA + H2O = (2S)-2-isopropylmalate + CoA + H(+)</text>
        <dbReference type="Rhea" id="RHEA:21524"/>
        <dbReference type="ChEBI" id="CHEBI:1178"/>
        <dbReference type="ChEBI" id="CHEBI:11851"/>
        <dbReference type="ChEBI" id="CHEBI:15377"/>
        <dbReference type="ChEBI" id="CHEBI:15378"/>
        <dbReference type="ChEBI" id="CHEBI:57287"/>
        <dbReference type="ChEBI" id="CHEBI:57288"/>
        <dbReference type="EC" id="2.3.3.13"/>
    </reaction>
</comment>
<comment type="pathway">
    <text evidence="10">Mycotoxin biosynthesis.</text>
</comment>
<comment type="induction">
    <text evidence="5">Expression is up-regulated more than 10 fold in toxin producing cultures.</text>
</comment>
<comment type="miscellaneous">
    <text evidence="5">Gene clusters encoding host-selective toxins (HSTs) are localized on conditionally dispensable chromosomes (CDCs), also called supernumerary chromosomes, where they are present in multiple copies (PubMed:17990954). The CDCs are not essential for saprophytic growth but controls host-selective pathogenicity (PubMed:17990954).</text>
</comment>
<comment type="similarity">
    <text evidence="8">Belongs to the alpha-IPM synthase/homocitrate synthase family. LeuA type 2 subfamily.</text>
</comment>
<protein>
    <recommendedName>
        <fullName evidence="1">Isopropyl malate synthase AMT7</fullName>
        <ecNumber evidence="1">2.3.3.13</ecNumber>
    </recommendedName>
    <alternativeName>
        <fullName evidence="6">AM-toxin biosynthesis protein 7</fullName>
    </alternativeName>
</protein>
<gene>
    <name evidence="6" type="primary">AMT7</name>
</gene>